<accession>Q02T54</accession>
<dbReference type="EMBL" id="CP000438">
    <property type="protein sequence ID" value="ABJ13509.1"/>
    <property type="molecule type" value="Genomic_DNA"/>
</dbReference>
<dbReference type="RefSeq" id="WP_003093672.1">
    <property type="nucleotide sequence ID" value="NZ_CP034244.1"/>
</dbReference>
<dbReference type="SMR" id="Q02T54"/>
<dbReference type="GeneID" id="77219224"/>
<dbReference type="KEGG" id="pau:PA14_09130"/>
<dbReference type="PseudoCAP" id="PA14_09130"/>
<dbReference type="HOGENOM" id="CLU_074407_2_0_6"/>
<dbReference type="BioCyc" id="PAER208963:G1G74-762-MONOMER"/>
<dbReference type="Proteomes" id="UP000000653">
    <property type="component" value="Chromosome"/>
</dbReference>
<dbReference type="GO" id="GO:0022625">
    <property type="term" value="C:cytosolic large ribosomal subunit"/>
    <property type="evidence" value="ECO:0007669"/>
    <property type="project" value="TreeGrafter"/>
</dbReference>
<dbReference type="GO" id="GO:0003735">
    <property type="term" value="F:structural constituent of ribosome"/>
    <property type="evidence" value="ECO:0007669"/>
    <property type="project" value="InterPro"/>
</dbReference>
<dbReference type="GO" id="GO:0006412">
    <property type="term" value="P:translation"/>
    <property type="evidence" value="ECO:0007669"/>
    <property type="project" value="UniProtKB-UniRule"/>
</dbReference>
<dbReference type="FunFam" id="3.90.1030.10:FF:000001">
    <property type="entry name" value="50S ribosomal protein L17"/>
    <property type="match status" value="1"/>
</dbReference>
<dbReference type="Gene3D" id="3.90.1030.10">
    <property type="entry name" value="Ribosomal protein L17"/>
    <property type="match status" value="1"/>
</dbReference>
<dbReference type="HAMAP" id="MF_01368">
    <property type="entry name" value="Ribosomal_bL17"/>
    <property type="match status" value="1"/>
</dbReference>
<dbReference type="InterPro" id="IPR000456">
    <property type="entry name" value="Ribosomal_bL17"/>
</dbReference>
<dbReference type="InterPro" id="IPR047859">
    <property type="entry name" value="Ribosomal_bL17_CS"/>
</dbReference>
<dbReference type="InterPro" id="IPR036373">
    <property type="entry name" value="Ribosomal_bL17_sf"/>
</dbReference>
<dbReference type="NCBIfam" id="TIGR00059">
    <property type="entry name" value="L17"/>
    <property type="match status" value="1"/>
</dbReference>
<dbReference type="PANTHER" id="PTHR14413:SF16">
    <property type="entry name" value="LARGE RIBOSOMAL SUBUNIT PROTEIN BL17M"/>
    <property type="match status" value="1"/>
</dbReference>
<dbReference type="PANTHER" id="PTHR14413">
    <property type="entry name" value="RIBOSOMAL PROTEIN L17"/>
    <property type="match status" value="1"/>
</dbReference>
<dbReference type="Pfam" id="PF01196">
    <property type="entry name" value="Ribosomal_L17"/>
    <property type="match status" value="1"/>
</dbReference>
<dbReference type="SUPFAM" id="SSF64263">
    <property type="entry name" value="Prokaryotic ribosomal protein L17"/>
    <property type="match status" value="1"/>
</dbReference>
<dbReference type="PROSITE" id="PS01167">
    <property type="entry name" value="RIBOSOMAL_L17"/>
    <property type="match status" value="1"/>
</dbReference>
<protein>
    <recommendedName>
        <fullName evidence="1">Large ribosomal subunit protein bL17</fullName>
    </recommendedName>
    <alternativeName>
        <fullName evidence="2">50S ribosomal protein L17</fullName>
    </alternativeName>
</protein>
<sequence>MRHRKSGRHLSRTSAHRKAMFQNMAVSLFEHELIKTTLPKAKELRRVAEPLITLAKEDSVANRRLAFDRTRSKAAVGKLFNDLGKRYANRPGGYLRILKCGFRAGDNAPMAYVELVDRPVGGEVVEAAE</sequence>
<reference key="1">
    <citation type="journal article" date="2006" name="Genome Biol.">
        <title>Genomic analysis reveals that Pseudomonas aeruginosa virulence is combinatorial.</title>
        <authorList>
            <person name="Lee D.G."/>
            <person name="Urbach J.M."/>
            <person name="Wu G."/>
            <person name="Liberati N.T."/>
            <person name="Feinbaum R.L."/>
            <person name="Miyata S."/>
            <person name="Diggins L.T."/>
            <person name="He J."/>
            <person name="Saucier M."/>
            <person name="Deziel E."/>
            <person name="Friedman L."/>
            <person name="Li L."/>
            <person name="Grills G."/>
            <person name="Montgomery K."/>
            <person name="Kucherlapati R."/>
            <person name="Rahme L.G."/>
            <person name="Ausubel F.M."/>
        </authorList>
    </citation>
    <scope>NUCLEOTIDE SEQUENCE [LARGE SCALE GENOMIC DNA]</scope>
    <source>
        <strain>UCBPP-PA14</strain>
    </source>
</reference>
<feature type="chain" id="PRO_1000055916" description="Large ribosomal subunit protein bL17">
    <location>
        <begin position="1"/>
        <end position="129"/>
    </location>
</feature>
<name>RL17_PSEAB</name>
<evidence type="ECO:0000255" key="1">
    <source>
        <dbReference type="HAMAP-Rule" id="MF_01368"/>
    </source>
</evidence>
<evidence type="ECO:0000305" key="2"/>
<comment type="subunit">
    <text evidence="1">Part of the 50S ribosomal subunit. Contacts protein L32.</text>
</comment>
<comment type="similarity">
    <text evidence="1">Belongs to the bacterial ribosomal protein bL17 family.</text>
</comment>
<keyword id="KW-0687">Ribonucleoprotein</keyword>
<keyword id="KW-0689">Ribosomal protein</keyword>
<gene>
    <name evidence="1" type="primary">rplQ</name>
    <name type="ordered locus">PA14_09130</name>
</gene>
<organism>
    <name type="scientific">Pseudomonas aeruginosa (strain UCBPP-PA14)</name>
    <dbReference type="NCBI Taxonomy" id="208963"/>
    <lineage>
        <taxon>Bacteria</taxon>
        <taxon>Pseudomonadati</taxon>
        <taxon>Pseudomonadota</taxon>
        <taxon>Gammaproteobacteria</taxon>
        <taxon>Pseudomonadales</taxon>
        <taxon>Pseudomonadaceae</taxon>
        <taxon>Pseudomonas</taxon>
    </lineage>
</organism>
<proteinExistence type="inferred from homology"/>